<feature type="chain" id="PRO_0000099704" description="Uncharacterized 9.5 kDa protein">
    <location>
        <begin position="1"/>
        <end position="74"/>
    </location>
</feature>
<gene>
    <name type="ORF">D ORF I</name>
</gene>
<proteinExistence type="predicted"/>
<keyword id="KW-1185">Reference proteome</keyword>
<dbReference type="EMBL" id="M35027">
    <property type="protein sequence ID" value="AAA48115.1"/>
    <property type="molecule type" value="Genomic_DNA"/>
</dbReference>
<dbReference type="PIR" id="B42517">
    <property type="entry name" value="B42517"/>
</dbReference>
<dbReference type="SMR" id="P20553"/>
<dbReference type="Proteomes" id="UP000008269">
    <property type="component" value="Segment"/>
</dbReference>
<reference key="1">
    <citation type="journal article" date="1990" name="Virology">
        <title>The complete DNA sequence of vaccinia virus.</title>
        <authorList>
            <person name="Goebel S.J."/>
            <person name="Johnson G.P."/>
            <person name="Perkus M.E."/>
            <person name="Davis S.W."/>
            <person name="Winslow J.P."/>
            <person name="Paoletti E."/>
        </authorList>
    </citation>
    <scope>NUCLEOTIDE SEQUENCE [LARGE SCALE GENOMIC DNA]</scope>
</reference>
<reference key="2">
    <citation type="journal article" date="1990" name="Virology">
        <title>Appendix to 'The complete DNA sequence of vaccinia virus'.</title>
        <authorList>
            <person name="Goebel S.J."/>
            <person name="Johnson G.P."/>
            <person name="Perkus M.E."/>
            <person name="Davis S.W."/>
            <person name="Winslow J.P."/>
            <person name="Paoletti E."/>
        </authorList>
    </citation>
    <scope>COMPLETE GENOME</scope>
</reference>
<accession>P20553</accession>
<name>YVDI_VACCC</name>
<organism>
    <name type="scientific">Vaccinia virus (strain Copenhagen)</name>
    <name type="common">VACV</name>
    <dbReference type="NCBI Taxonomy" id="10249"/>
    <lineage>
        <taxon>Viruses</taxon>
        <taxon>Varidnaviria</taxon>
        <taxon>Bamfordvirae</taxon>
        <taxon>Nucleocytoviricota</taxon>
        <taxon>Pokkesviricetes</taxon>
        <taxon>Chitovirales</taxon>
        <taxon>Poxviridae</taxon>
        <taxon>Chordopoxvirinae</taxon>
        <taxon>Orthopoxvirus</taxon>
        <taxon>Vaccinia virus</taxon>
    </lineage>
</organism>
<organismHost>
    <name type="scientific">Homo sapiens</name>
    <name type="common">Human</name>
    <dbReference type="NCBI Taxonomy" id="9606"/>
</organismHost>
<sequence>MNFSYSRRWLVYLTYYSPRFLYKRWFNLYILNHISNKAQFRNINKFFVERFKVERRVTNNDIGYWIEGYRYGNF</sequence>
<protein>
    <recommendedName>
        <fullName>Uncharacterized 9.5 kDa protein</fullName>
    </recommendedName>
</protein>